<accession>O75380</accession>
<comment type="function">
    <text evidence="6">Accessory subunit of the mitochondrial membrane respiratory chain NADH dehydrogenase (Complex I), that is believed not to be involved in catalysis. Complex I functions in the transfer of electrons from NADH to the respiratory chain. The immediate electron acceptor for the enzyme is believed to be ubiquinone.</text>
</comment>
<comment type="subunit">
    <text evidence="3 6">Mammalian complex I is composed of 45 different subunits (PubMed:12611891, PubMed:27626371). This is a component of the iron-sulfur (IP) fragment of the enzyme (PubMed:12611891).</text>
</comment>
<comment type="subcellular location">
    <subcellularLocation>
        <location evidence="8">Mitochondrion inner membrane</location>
        <topology evidence="7">Peripheral membrane protein</topology>
        <orientation evidence="7">Matrix side</orientation>
    </subcellularLocation>
</comment>
<comment type="disease" evidence="4 5">
    <disease id="DI-05407">
        <name>Mitochondrial complex I deficiency, nuclear type 9</name>
        <acronym>MC1DN9</acronym>
        <description>A form of mitochondrial complex I deficiency, the most common biochemical signature of mitochondrial disorders, a group of highly heterogeneous conditions characterized by defective oxidative phosphorylation, which collectively affects 1 in 5-10000 live births. Clinical disorders have variable severity, ranging from lethal neonatal disease to adult-onset neurodegenerative disorders. Phenotypes include macrocephaly with progressive leukodystrophy, non-specific encephalopathy, cardiomyopathy, myopathy, liver disease, Leigh syndrome, Leber hereditary optic neuropathy, and some forms of Parkinson disease. MC1DN9 transmission pattern is consistent with autosomal recessive inheritance.</description>
        <dbReference type="MIM" id="618232"/>
    </disease>
    <text>The disease is caused by variants affecting the gene represented in this entry.</text>
</comment>
<comment type="similarity">
    <text evidence="7">Belongs to the complex I NDUFS6 subunit family.</text>
</comment>
<organism>
    <name type="scientific">Homo sapiens</name>
    <name type="common">Human</name>
    <dbReference type="NCBI Taxonomy" id="9606"/>
    <lineage>
        <taxon>Eukaryota</taxon>
        <taxon>Metazoa</taxon>
        <taxon>Chordata</taxon>
        <taxon>Craniata</taxon>
        <taxon>Vertebrata</taxon>
        <taxon>Euteleostomi</taxon>
        <taxon>Mammalia</taxon>
        <taxon>Eutheria</taxon>
        <taxon>Euarchontoglires</taxon>
        <taxon>Primates</taxon>
        <taxon>Haplorrhini</taxon>
        <taxon>Catarrhini</taxon>
        <taxon>Hominidae</taxon>
        <taxon>Homo</taxon>
    </lineage>
</organism>
<protein>
    <recommendedName>
        <fullName>NADH dehydrogenase [ubiquinone] iron-sulfur protein 6, mitochondrial</fullName>
    </recommendedName>
    <alternativeName>
        <fullName>Complex I-13kD-A</fullName>
        <shortName>CI-13kD-A</shortName>
    </alternativeName>
    <alternativeName>
        <fullName>NADH-ubiquinone oxidoreductase 13 kDa-A subunit</fullName>
    </alternativeName>
</protein>
<feature type="transit peptide" description="Mitochondrion" evidence="1">
    <location>
        <begin position="1"/>
        <end position="28"/>
    </location>
</feature>
<feature type="chain" id="PRO_0000020020" description="NADH dehydrogenase [ubiquinone] iron-sulfur protein 6, mitochondrial">
    <location>
        <begin position="29"/>
        <end position="124"/>
    </location>
</feature>
<feature type="modified residue" description="N6-acetyllysine" evidence="2">
    <location>
        <position position="98"/>
    </location>
</feature>
<feature type="sequence variant" id="VAR_078947" description="In MC1DN9; dbSNP:rs267606913." evidence="5">
    <original>C</original>
    <variation>Y</variation>
    <location>
        <position position="115"/>
    </location>
</feature>
<feature type="strand" evidence="9">
    <location>
        <begin position="36"/>
        <end position="38"/>
    </location>
</feature>
<feature type="helix" evidence="9">
    <location>
        <begin position="51"/>
        <end position="56"/>
    </location>
</feature>
<feature type="helix" evidence="9">
    <location>
        <begin position="68"/>
        <end position="74"/>
    </location>
</feature>
<feature type="strand" evidence="9">
    <location>
        <begin position="81"/>
        <end position="83"/>
    </location>
</feature>
<feature type="strand" evidence="9">
    <location>
        <begin position="85"/>
        <end position="87"/>
    </location>
</feature>
<feature type="strand" evidence="9">
    <location>
        <begin position="94"/>
        <end position="96"/>
    </location>
</feature>
<feature type="strand" evidence="9">
    <location>
        <begin position="99"/>
        <end position="101"/>
    </location>
</feature>
<feature type="strand" evidence="9">
    <location>
        <begin position="113"/>
        <end position="115"/>
    </location>
</feature>
<keyword id="KW-0002">3D-structure</keyword>
<keyword id="KW-0007">Acetylation</keyword>
<keyword id="KW-0225">Disease variant</keyword>
<keyword id="KW-0249">Electron transport</keyword>
<keyword id="KW-0472">Membrane</keyword>
<keyword id="KW-0496">Mitochondrion</keyword>
<keyword id="KW-0999">Mitochondrion inner membrane</keyword>
<keyword id="KW-1274">Primary mitochondrial disease</keyword>
<keyword id="KW-1267">Proteomics identification</keyword>
<keyword id="KW-1185">Reference proteome</keyword>
<keyword id="KW-0679">Respiratory chain</keyword>
<keyword id="KW-0809">Transit peptide</keyword>
<keyword id="KW-0813">Transport</keyword>
<sequence>MAAAMTFCRLLNRCGEAARSLPLGARCFGVRVSPTGEKVTHTGQVYDDKDYRRIRFVGRQKEVNENFAIDLIAEQPVSEVETRVIACDGGGGALGHPKVYINLDKETKTGTCGYCGLQFRQHHH</sequence>
<reference key="1">
    <citation type="journal article" date="1998" name="Biochem. Biophys. Res. Commun.">
        <title>cDNA sequence and chromosomal localization of the remaining three human nuclear encoded iron sulphur protein (IP) subunits of complex I: the human IP fraction is completed.</title>
        <authorList>
            <person name="Loeffen J."/>
            <person name="van den Heuvel L."/>
            <person name="Smeets R."/>
            <person name="Triepels R."/>
            <person name="Sengers R."/>
            <person name="Trijbels F."/>
            <person name="Smeitink J."/>
        </authorList>
    </citation>
    <scope>NUCLEOTIDE SEQUENCE [MRNA]</scope>
</reference>
<reference key="2">
    <citation type="journal article" date="2004" name="Genome Res.">
        <title>The status, quality, and expansion of the NIH full-length cDNA project: the Mammalian Gene Collection (MGC).</title>
        <authorList>
            <consortium name="The MGC Project Team"/>
        </authorList>
    </citation>
    <scope>NUCLEOTIDE SEQUENCE [LARGE SCALE MRNA]</scope>
    <source>
        <tissue>Lung</tissue>
        <tissue>Skin</tissue>
    </source>
</reference>
<reference key="3">
    <citation type="journal article" date="2003" name="J. Biol. Chem.">
        <title>The subunit composition of the human NADH dehydrogenase obtained by rapid one-step immunopurification.</title>
        <authorList>
            <person name="Murray J."/>
            <person name="Zhang B."/>
            <person name="Taylor S.W."/>
            <person name="Oglesbee D."/>
            <person name="Fahy E."/>
            <person name="Marusich M.F."/>
            <person name="Ghosh S.S."/>
            <person name="Capaldi R.A."/>
        </authorList>
    </citation>
    <scope>IDENTIFICATION IN THE NADH-UBIQUINONE OXIDOREDUCTASE COMPLEX</scope>
    <scope>IDENTIFICATION BY MASS SPECTROMETRY</scope>
    <scope>SUBCELLULAR LOCATION</scope>
</reference>
<reference key="4">
    <citation type="journal article" date="2004" name="J. Clin. Invest.">
        <title>NDUFS6 mutations are a novel cause of lethal neonatal mitochondrial complex I deficiency.</title>
        <authorList>
            <person name="Kirby D.M."/>
            <person name="Salemi R."/>
            <person name="Sugiana C."/>
            <person name="Ohtake A."/>
            <person name="Parry L."/>
            <person name="Bell K.M."/>
            <person name="Kirk E.P."/>
            <person name="Boneh A."/>
            <person name="Taylor R.W."/>
            <person name="Dahl H.H."/>
            <person name="Ryan M.T."/>
            <person name="Thorburn D.R."/>
        </authorList>
    </citation>
    <scope>INVOLVEMENT IN MC1DN9</scope>
</reference>
<reference key="5">
    <citation type="journal article" date="2011" name="BMC Syst. Biol.">
        <title>Initial characterization of the human central proteome.</title>
        <authorList>
            <person name="Burkard T.R."/>
            <person name="Planyavsky M."/>
            <person name="Kaupe I."/>
            <person name="Breitwieser F.P."/>
            <person name="Buerckstuemmer T."/>
            <person name="Bennett K.L."/>
            <person name="Superti-Furga G."/>
            <person name="Colinge J."/>
        </authorList>
    </citation>
    <scope>IDENTIFICATION BY MASS SPECTROMETRY [LARGE SCALE ANALYSIS]</scope>
</reference>
<reference key="6">
    <citation type="journal article" date="2014" name="J. Proteomics">
        <title>An enzyme assisted RP-RPLC approach for in-depth analysis of human liver phosphoproteome.</title>
        <authorList>
            <person name="Bian Y."/>
            <person name="Song C."/>
            <person name="Cheng K."/>
            <person name="Dong M."/>
            <person name="Wang F."/>
            <person name="Huang J."/>
            <person name="Sun D."/>
            <person name="Wang L."/>
            <person name="Ye M."/>
            <person name="Zou H."/>
        </authorList>
    </citation>
    <scope>IDENTIFICATION BY MASS SPECTROMETRY [LARGE SCALE ANALYSIS]</scope>
    <source>
        <tissue>Liver</tissue>
    </source>
</reference>
<reference key="7">
    <citation type="journal article" date="2015" name="Proteomics">
        <title>N-terminome analysis of the human mitochondrial proteome.</title>
        <authorList>
            <person name="Vaca Jacome A.S."/>
            <person name="Rabilloud T."/>
            <person name="Schaeffer-Reiss C."/>
            <person name="Rompais M."/>
            <person name="Ayoub D."/>
            <person name="Lane L."/>
            <person name="Bairoch A."/>
            <person name="Van Dorsselaer A."/>
            <person name="Carapito C."/>
        </authorList>
    </citation>
    <scope>IDENTIFICATION BY MASS SPECTROMETRY [LARGE SCALE ANALYSIS]</scope>
</reference>
<reference key="8">
    <citation type="journal article" date="2016" name="Nature">
        <title>Accessory subunits are integral for assembly and function of human mitochondrial complex I.</title>
        <authorList>
            <person name="Stroud D.A."/>
            <person name="Surgenor E.E."/>
            <person name="Formosa L.E."/>
            <person name="Reljic B."/>
            <person name="Frazier A.E."/>
            <person name="Dibley M.G."/>
            <person name="Osellame L.D."/>
            <person name="Stait T."/>
            <person name="Beilharz T.H."/>
            <person name="Thorburn D.R."/>
            <person name="Salim A."/>
            <person name="Ryan M.T."/>
        </authorList>
    </citation>
    <scope>FUNCTION</scope>
    <scope>IDENTIFICATION IN THE NADH-UBIQUINONE OXIDOREDUCTASE COMPLEX</scope>
</reference>
<reference key="9">
    <citation type="journal article" date="2009" name="Eur. J. Hum. Genet.">
        <title>Mutated NDUFS6 is the cause of fatal neonatal lactic acidemia in Caucasus Jews.</title>
        <authorList>
            <person name="Spiegel R."/>
            <person name="Shaag A."/>
            <person name="Mandel H."/>
            <person name="Reich D."/>
            <person name="Penyakov M."/>
            <person name="Hujeirat Y."/>
            <person name="Saada A."/>
            <person name="Elpeleg O."/>
            <person name="Shalev S.A."/>
        </authorList>
    </citation>
    <scope>VARIANT MC1DN9 TYR-115</scope>
</reference>
<gene>
    <name type="primary">NDUFS6</name>
</gene>
<dbReference type="EMBL" id="AF044959">
    <property type="protein sequence ID" value="AAC27799.1"/>
    <property type="molecule type" value="mRNA"/>
</dbReference>
<dbReference type="EMBL" id="BC038664">
    <property type="protein sequence ID" value="AAH38664.1"/>
    <property type="molecule type" value="mRNA"/>
</dbReference>
<dbReference type="EMBL" id="BC046155">
    <property type="protein sequence ID" value="AAH46155.1"/>
    <property type="molecule type" value="mRNA"/>
</dbReference>
<dbReference type="CCDS" id="CCDS3866.1"/>
<dbReference type="PIR" id="JE0194">
    <property type="entry name" value="JE0194"/>
</dbReference>
<dbReference type="RefSeq" id="NP_004544.1">
    <property type="nucleotide sequence ID" value="NM_004553.6"/>
</dbReference>
<dbReference type="PDB" id="5XTB">
    <property type="method" value="EM"/>
    <property type="resolution" value="3.40 A"/>
    <property type="chains" value="T=29-123"/>
</dbReference>
<dbReference type="PDB" id="5XTD">
    <property type="method" value="EM"/>
    <property type="resolution" value="3.70 A"/>
    <property type="chains" value="T=29-123"/>
</dbReference>
<dbReference type="PDB" id="5XTH">
    <property type="method" value="EM"/>
    <property type="resolution" value="3.90 A"/>
    <property type="chains" value="T=29-123"/>
</dbReference>
<dbReference type="PDB" id="5XTI">
    <property type="method" value="EM"/>
    <property type="resolution" value="17.40 A"/>
    <property type="chains" value="BT/T=29-123"/>
</dbReference>
<dbReference type="PDBsum" id="5XTB"/>
<dbReference type="PDBsum" id="5XTD"/>
<dbReference type="PDBsum" id="5XTH"/>
<dbReference type="PDBsum" id="5XTI"/>
<dbReference type="SMR" id="O75380"/>
<dbReference type="BioGRID" id="110805">
    <property type="interactions" value="247"/>
</dbReference>
<dbReference type="ComplexPortal" id="CPX-577">
    <property type="entry name" value="Mitochondrial respiratory chain complex I"/>
</dbReference>
<dbReference type="CORUM" id="O75380"/>
<dbReference type="FunCoup" id="O75380">
    <property type="interactions" value="1080"/>
</dbReference>
<dbReference type="IntAct" id="O75380">
    <property type="interactions" value="128"/>
</dbReference>
<dbReference type="MINT" id="O75380"/>
<dbReference type="STRING" id="9606.ENSP00000274137"/>
<dbReference type="BindingDB" id="O75380"/>
<dbReference type="ChEMBL" id="CHEMBL2363065"/>
<dbReference type="DrugBank" id="DB00157">
    <property type="generic name" value="NADH"/>
</dbReference>
<dbReference type="DrugCentral" id="O75380"/>
<dbReference type="GlyGen" id="O75380">
    <property type="glycosylation" value="1 site, 1 O-linked glycan (1 site)"/>
</dbReference>
<dbReference type="iPTMnet" id="O75380"/>
<dbReference type="PhosphoSitePlus" id="O75380"/>
<dbReference type="SwissPalm" id="O75380"/>
<dbReference type="BioMuta" id="NDUFS6"/>
<dbReference type="jPOST" id="O75380"/>
<dbReference type="MassIVE" id="O75380"/>
<dbReference type="PaxDb" id="9606-ENSP00000274137"/>
<dbReference type="PeptideAtlas" id="O75380"/>
<dbReference type="ProteomicsDB" id="49952"/>
<dbReference type="Pumba" id="O75380"/>
<dbReference type="TopDownProteomics" id="O75380"/>
<dbReference type="Antibodypedia" id="22354">
    <property type="antibodies" value="213 antibodies from 31 providers"/>
</dbReference>
<dbReference type="DNASU" id="4726"/>
<dbReference type="Ensembl" id="ENST00000274137.10">
    <property type="protein sequence ID" value="ENSP00000274137.6"/>
    <property type="gene ID" value="ENSG00000145494.12"/>
</dbReference>
<dbReference type="GeneID" id="4726"/>
<dbReference type="KEGG" id="hsa:4726"/>
<dbReference type="MANE-Select" id="ENST00000274137.10">
    <property type="protein sequence ID" value="ENSP00000274137.6"/>
    <property type="RefSeq nucleotide sequence ID" value="NM_004553.6"/>
    <property type="RefSeq protein sequence ID" value="NP_004544.1"/>
</dbReference>
<dbReference type="AGR" id="HGNC:7713"/>
<dbReference type="CTD" id="4726"/>
<dbReference type="DisGeNET" id="4726"/>
<dbReference type="GeneCards" id="NDUFS6"/>
<dbReference type="HGNC" id="HGNC:7713">
    <property type="gene designation" value="NDUFS6"/>
</dbReference>
<dbReference type="HPA" id="ENSG00000145494">
    <property type="expression patterns" value="Tissue enhanced (skeletal)"/>
</dbReference>
<dbReference type="MalaCards" id="NDUFS6"/>
<dbReference type="MIM" id="603848">
    <property type="type" value="gene"/>
</dbReference>
<dbReference type="MIM" id="618232">
    <property type="type" value="phenotype"/>
</dbReference>
<dbReference type="neXtProt" id="NX_O75380"/>
<dbReference type="OpenTargets" id="ENSG00000145494"/>
<dbReference type="Orphanet" id="2609">
    <property type="disease" value="Isolated complex I deficiency"/>
</dbReference>
<dbReference type="PharmGKB" id="PA31523"/>
<dbReference type="VEuPathDB" id="HostDB:ENSG00000145494"/>
<dbReference type="eggNOG" id="KOG3456">
    <property type="taxonomic scope" value="Eukaryota"/>
</dbReference>
<dbReference type="GeneTree" id="ENSGT00390000015775"/>
<dbReference type="HOGENOM" id="CLU_083053_3_2_1"/>
<dbReference type="InParanoid" id="O75380"/>
<dbReference type="OMA" id="TACCDGG"/>
<dbReference type="OrthoDB" id="307899at2759"/>
<dbReference type="PAN-GO" id="O75380">
    <property type="GO annotations" value="2 GO annotations based on evolutionary models"/>
</dbReference>
<dbReference type="PhylomeDB" id="O75380"/>
<dbReference type="TreeFam" id="TF315128"/>
<dbReference type="BioCyc" id="MetaCyc:ENSG00000145494-MONOMER"/>
<dbReference type="PathwayCommons" id="O75380"/>
<dbReference type="Reactome" id="R-HSA-611105">
    <property type="pathway name" value="Respiratory electron transport"/>
</dbReference>
<dbReference type="Reactome" id="R-HSA-6799198">
    <property type="pathway name" value="Complex I biogenesis"/>
</dbReference>
<dbReference type="SignaLink" id="O75380"/>
<dbReference type="SIGNOR" id="O75380"/>
<dbReference type="BioGRID-ORCS" id="4726">
    <property type="hits" value="15 hits in 1160 CRISPR screens"/>
</dbReference>
<dbReference type="CD-CODE" id="FB4E32DD">
    <property type="entry name" value="Presynaptic clusters and postsynaptic densities"/>
</dbReference>
<dbReference type="ChiTaRS" id="NDUFS6">
    <property type="organism name" value="human"/>
</dbReference>
<dbReference type="GeneWiki" id="NDUFS6"/>
<dbReference type="GenomeRNAi" id="4726"/>
<dbReference type="Pharos" id="O75380">
    <property type="development level" value="Tclin"/>
</dbReference>
<dbReference type="PRO" id="PR:O75380"/>
<dbReference type="Proteomes" id="UP000005640">
    <property type="component" value="Chromosome 5"/>
</dbReference>
<dbReference type="RNAct" id="O75380">
    <property type="molecule type" value="protein"/>
</dbReference>
<dbReference type="Bgee" id="ENSG00000145494">
    <property type="expression patterns" value="Expressed in tendon of biceps brachii and 203 other cell types or tissues"/>
</dbReference>
<dbReference type="ExpressionAtlas" id="O75380">
    <property type="expression patterns" value="baseline and differential"/>
</dbReference>
<dbReference type="GO" id="GO:0005743">
    <property type="term" value="C:mitochondrial inner membrane"/>
    <property type="evidence" value="ECO:0000314"/>
    <property type="project" value="ComplexPortal"/>
</dbReference>
<dbReference type="GO" id="GO:0005739">
    <property type="term" value="C:mitochondrion"/>
    <property type="evidence" value="ECO:0006056"/>
    <property type="project" value="FlyBase"/>
</dbReference>
<dbReference type="GO" id="GO:0045271">
    <property type="term" value="C:respiratory chain complex I"/>
    <property type="evidence" value="ECO:0000314"/>
    <property type="project" value="UniProtKB"/>
</dbReference>
<dbReference type="GO" id="GO:0009055">
    <property type="term" value="F:electron transfer activity"/>
    <property type="evidence" value="ECO:0000303"/>
    <property type="project" value="UniProtKB"/>
</dbReference>
<dbReference type="GO" id="GO:0008137">
    <property type="term" value="F:NADH dehydrogenase (ubiquinone) activity"/>
    <property type="evidence" value="ECO:0000303"/>
    <property type="project" value="UniProtKB"/>
</dbReference>
<dbReference type="GO" id="GO:0009060">
    <property type="term" value="P:aerobic respiration"/>
    <property type="evidence" value="ECO:0000303"/>
    <property type="project" value="ComplexPortal"/>
</dbReference>
<dbReference type="GO" id="GO:0090398">
    <property type="term" value="P:cellular senescence"/>
    <property type="evidence" value="ECO:0007669"/>
    <property type="project" value="Ensembl"/>
</dbReference>
<dbReference type="GO" id="GO:0072359">
    <property type="term" value="P:circulatory system development"/>
    <property type="evidence" value="ECO:0007669"/>
    <property type="project" value="Ensembl"/>
</dbReference>
<dbReference type="GO" id="GO:0030330">
    <property type="term" value="P:DNA damage response, signal transduction by p53 class mediator"/>
    <property type="evidence" value="ECO:0007669"/>
    <property type="project" value="Ensembl"/>
</dbReference>
<dbReference type="GO" id="GO:0006631">
    <property type="term" value="P:fatty acid metabolic process"/>
    <property type="evidence" value="ECO:0007669"/>
    <property type="project" value="Ensembl"/>
</dbReference>
<dbReference type="GO" id="GO:0010467">
    <property type="term" value="P:gene expression"/>
    <property type="evidence" value="ECO:0007669"/>
    <property type="project" value="Ensembl"/>
</dbReference>
<dbReference type="GO" id="GO:0001822">
    <property type="term" value="P:kidney development"/>
    <property type="evidence" value="ECO:0007669"/>
    <property type="project" value="Ensembl"/>
</dbReference>
<dbReference type="GO" id="GO:0072497">
    <property type="term" value="P:mesenchymal stem cell differentiation"/>
    <property type="evidence" value="ECO:0007669"/>
    <property type="project" value="Ensembl"/>
</dbReference>
<dbReference type="GO" id="GO:0097168">
    <property type="term" value="P:mesenchymal stem cell proliferation"/>
    <property type="evidence" value="ECO:0007669"/>
    <property type="project" value="Ensembl"/>
</dbReference>
<dbReference type="GO" id="GO:0006120">
    <property type="term" value="P:mitochondrial electron transport, NADH to ubiquinone"/>
    <property type="evidence" value="ECO:0000318"/>
    <property type="project" value="GO_Central"/>
</dbReference>
<dbReference type="GO" id="GO:0032981">
    <property type="term" value="P:mitochondrial respiratory chain complex I assembly"/>
    <property type="evidence" value="ECO:0007669"/>
    <property type="project" value="Ensembl"/>
</dbReference>
<dbReference type="GO" id="GO:0035264">
    <property type="term" value="P:multicellular organism growth"/>
    <property type="evidence" value="ECO:0007669"/>
    <property type="project" value="Ensembl"/>
</dbReference>
<dbReference type="GO" id="GO:0006936">
    <property type="term" value="P:muscle contraction"/>
    <property type="evidence" value="ECO:0007669"/>
    <property type="project" value="Ensembl"/>
</dbReference>
<dbReference type="GO" id="GO:0042776">
    <property type="term" value="P:proton motive force-driven mitochondrial ATP synthesis"/>
    <property type="evidence" value="ECO:0000303"/>
    <property type="project" value="ComplexPortal"/>
</dbReference>
<dbReference type="GO" id="GO:0072593">
    <property type="term" value="P:reactive oxygen species metabolic process"/>
    <property type="evidence" value="ECO:0007669"/>
    <property type="project" value="Ensembl"/>
</dbReference>
<dbReference type="GO" id="GO:0051881">
    <property type="term" value="P:regulation of mitochondrial membrane potential"/>
    <property type="evidence" value="ECO:0007669"/>
    <property type="project" value="Ensembl"/>
</dbReference>
<dbReference type="GO" id="GO:0061458">
    <property type="term" value="P:reproductive system development"/>
    <property type="evidence" value="ECO:0007669"/>
    <property type="project" value="Ensembl"/>
</dbReference>
<dbReference type="GO" id="GO:0017145">
    <property type="term" value="P:stem cell division"/>
    <property type="evidence" value="ECO:0007669"/>
    <property type="project" value="Ensembl"/>
</dbReference>
<dbReference type="FunFam" id="2.60.260.40:FF:000002">
    <property type="entry name" value="NADH dehydrogenase [ubiquinone] iron-sulfur protein 6, mitochondrial"/>
    <property type="match status" value="1"/>
</dbReference>
<dbReference type="Gene3D" id="2.60.260.40">
    <property type="entry name" value="q5lls5 like domains"/>
    <property type="match status" value="1"/>
</dbReference>
<dbReference type="InterPro" id="IPR016668">
    <property type="entry name" value="NDUFS6"/>
</dbReference>
<dbReference type="InterPro" id="IPR019401">
    <property type="entry name" value="Znf_CHCC"/>
</dbReference>
<dbReference type="PANTHER" id="PTHR13156:SF0">
    <property type="entry name" value="NADH DEHYDROGENASE [UBIQUINONE] IRON-SULFUR PROTEIN 6, MITOCHONDRIAL"/>
    <property type="match status" value="1"/>
</dbReference>
<dbReference type="PANTHER" id="PTHR13156">
    <property type="entry name" value="NADH-UBIQUINONE OXIDOREDUCTASE 13 KD-A SUBUNIT"/>
    <property type="match status" value="1"/>
</dbReference>
<dbReference type="Pfam" id="PF10276">
    <property type="entry name" value="zf-CHCC"/>
    <property type="match status" value="1"/>
</dbReference>
<dbReference type="PIRSF" id="PIRSF016564">
    <property type="entry name" value="CI-13KD-A"/>
    <property type="match status" value="1"/>
</dbReference>
<name>NDUS6_HUMAN</name>
<evidence type="ECO:0000250" key="1"/>
<evidence type="ECO:0000250" key="2">
    <source>
        <dbReference type="UniProtKB" id="P52503"/>
    </source>
</evidence>
<evidence type="ECO:0000269" key="3">
    <source>
    </source>
</evidence>
<evidence type="ECO:0000269" key="4">
    <source>
    </source>
</evidence>
<evidence type="ECO:0000269" key="5">
    <source>
    </source>
</evidence>
<evidence type="ECO:0000269" key="6">
    <source>
    </source>
</evidence>
<evidence type="ECO:0000305" key="7"/>
<evidence type="ECO:0000305" key="8">
    <source>
    </source>
</evidence>
<evidence type="ECO:0007829" key="9">
    <source>
        <dbReference type="PDB" id="5XTB"/>
    </source>
</evidence>
<proteinExistence type="evidence at protein level"/>